<accession>O88559</accession>
<accession>Q3U491</accession>
<accession>Q8CI72</accession>
<accession>Q91UZ7</accession>
<evidence type="ECO:0000250" key="1">
    <source>
        <dbReference type="UniProtKB" id="O00255"/>
    </source>
</evidence>
<evidence type="ECO:0000256" key="2">
    <source>
        <dbReference type="SAM" id="MobiDB-lite"/>
    </source>
</evidence>
<evidence type="ECO:0000269" key="3">
    <source>
    </source>
</evidence>
<evidence type="ECO:0000269" key="4">
    <source>
    </source>
</evidence>
<evidence type="ECO:0000269" key="5">
    <source>
    </source>
</evidence>
<evidence type="ECO:0000269" key="6">
    <source>
    </source>
</evidence>
<evidence type="ECO:0000269" key="7">
    <source>
    </source>
</evidence>
<evidence type="ECO:0000269" key="8">
    <source>
    </source>
</evidence>
<evidence type="ECO:0000303" key="9">
    <source>
    </source>
</evidence>
<evidence type="ECO:0000305" key="10"/>
<comment type="function">
    <text evidence="1 6">Essential component of a MLL/SET1 histone methyltransferase (HMT) complex, a complex that specifically methylates 'Lys-4' of histone H3 (H3K4). Functions as a transcriptional regulator. Binds to the TERT promoter and represses telomerase expression. Plays a role in TGFB1-mediated inhibition of cell-proliferation, possibly regulating SMAD3 transcriptional activity. Represses JUND-mediated transcriptional activation on AP1 sites, as well as that mediated by NFKB subunit RELA. Positively regulates HOXC8 and HOXC6 gene expression (By similarity). May be involved in normal hematopoiesis through the activation of HOXA9 expression. May be involved in DNA repair.</text>
</comment>
<comment type="subunit">
    <text evidence="1 8">Component of the MLL-HCF complex, at least composed of KMT2A/MLL1, MEN1, ASH2L, RBBP5, DPY30, WDR5, HCFC1 and HCFC2 (By similarity). Component of the menin-associated histone methyltransferase complex, at least composed of KMT2B/MLL4, MEN1, ASH2L, RBBP5, DPY30 and WDR5 (By similarity). Interacts with POLR2B (By similarity). Interacts with POLR2A phosphorylated at 'Ser-5', but not with the unphosphorylated, nor 'Ser-2' phosphorylated POLR2A forms (By similarity). Interacts with FANCD2 and DBF4 (By similarity). Interacts with SMAD3, but not with SMAD2, nor SMAD4 (By similarity). Directly interacts with NFKB1, NFKB2 and RELA (By similarity). Interacts with JUND (via MBM motif); inhibits the interaction of JUND with MAPK10 and the phosphorylation of JUND by MAP kinases MAPK8 and MAPK10 (PubMed:9989505). Interacts with KMT2A (via MBM motif) (By similarity). The KMT2A-MEN1 complex interacts with PSIP1 with a greater affinity as MEN1 enhances interaction of KMT2A with PSIP1 (By similarity).</text>
</comment>
<comment type="interaction">
    <interactant intactId="EBI-3990176">
        <id>O88559</id>
    </interactant>
    <interactant intactId="EBI-5276764">
        <id>Q9Z0Y9</id>
        <label>Nr1h3</label>
    </interactant>
    <organismsDiffer>false</organismsDiffer>
    <experiments>3</experiments>
</comment>
<comment type="interaction">
    <interactant intactId="EBI-3990176">
        <id>O88559</id>
    </interactant>
    <interactant intactId="EBI-5273083">
        <id>P23204</id>
        <label>Ppara</label>
    </interactant>
    <organismsDiffer>false</organismsDiffer>
    <experiments>2</experiments>
</comment>
<comment type="subcellular location">
    <subcellularLocation>
        <location evidence="7">Nucleus</location>
    </subcellularLocation>
    <text evidence="7">May be perinuclear in testis.</text>
</comment>
<comment type="alternative products">
    <event type="alternative splicing"/>
    <isoform>
        <id>O88559-1</id>
        <name>1</name>
        <sequence type="displayed"/>
    </isoform>
    <isoform>
        <id>O88559-2</id>
        <name>2</name>
        <sequence type="described" ref="VSP_041100"/>
    </isoform>
</comment>
<comment type="tissue specificity">
    <text evidence="3 4 7">Widely expressed, with high levels in hippocampus, cerebral cortex, testis and thymus (at protein level). Also expressed at high levels in pancreatic islets, ovary and bone marrow. In the brain, highest expression in hippocampus pyramidal nerve cells (at protein level). In the testis, may be expressed in spermatogonia (at protein level). Low expression, if any, in skeletal muscle.</text>
</comment>
<comment type="developmental stage">
    <text evidence="3 7">First detected at 7 dpc. At 13.5 dpc, expressed throughout the embryo, including forelimb, gut, head, heart and lung. At 17 dpc, expression becomes more restricted, with high levels mainly in the thymus, skeletal muscle, brain and spinal cord.</text>
</comment>
<comment type="disruption phenotype">
    <text evidence="5">Homozygous mice die in utero at 11.5-12.5 dpc. At 9 months of age, heterozygous mice develop pancreatic islet lesions, from hyperplasia to insulin-producing islet cell tumors, and frequently parathyroid adenomas. Larger, more numerous tumors involving pancreatic islets, parathyroids, thyroid, adrenal cortex and pituitary are seen by 16 months. All tumors show loss of the wild-type allele.</text>
</comment>
<comment type="sequence caution" evidence="10">
    <conflict type="erroneous initiation">
        <sequence resource="EMBL-CDS" id="BAE32542"/>
    </conflict>
    <text>Extended N-terminus.</text>
</comment>
<organism>
    <name type="scientific">Mus musculus</name>
    <name type="common">Mouse</name>
    <dbReference type="NCBI Taxonomy" id="10090"/>
    <lineage>
        <taxon>Eukaryota</taxon>
        <taxon>Metazoa</taxon>
        <taxon>Chordata</taxon>
        <taxon>Craniata</taxon>
        <taxon>Vertebrata</taxon>
        <taxon>Euteleostomi</taxon>
        <taxon>Mammalia</taxon>
        <taxon>Eutheria</taxon>
        <taxon>Euarchontoglires</taxon>
        <taxon>Glires</taxon>
        <taxon>Rodentia</taxon>
        <taxon>Myomorpha</taxon>
        <taxon>Muroidea</taxon>
        <taxon>Muridae</taxon>
        <taxon>Murinae</taxon>
        <taxon>Mus</taxon>
        <taxon>Mus</taxon>
    </lineage>
</organism>
<reference key="1">
    <citation type="journal article" date="1998" name="Oncogene">
        <title>Characterization of the mouse Men1 gene and its expression during development.</title>
        <authorList>
            <person name="Stewart C."/>
            <person name="Parente F."/>
            <person name="Piehl F."/>
            <person name="Farnebo F."/>
            <person name="Quincey D."/>
            <person name="Silins G."/>
            <person name="Bergman L."/>
            <person name="Carle G.F."/>
            <person name="Lemmens I."/>
            <person name="Grimmond S."/>
            <person name="Xian C.Z."/>
            <person name="Khodei S."/>
            <person name="Teh B.T."/>
            <person name="Lagercrantz J."/>
            <person name="Siggers P."/>
            <person name="Calender A."/>
            <person name="van de Vem V."/>
            <person name="Kas K."/>
            <person name="Weber G."/>
            <person name="Hayward N."/>
            <person name="Gaudray P."/>
            <person name="Larsson C."/>
        </authorList>
    </citation>
    <scope>NUCLEOTIDE SEQUENCE [GENOMIC DNA / MRNA] (ISOFORM 1)</scope>
    <scope>SUBCELLULAR LOCATION</scope>
    <scope>TISSUE SPECIFICITY</scope>
    <scope>DEVELOPMENTAL STAGE</scope>
</reference>
<reference key="2">
    <citation type="journal article" date="1999" name="Biochim. Biophys. Acta">
        <title>Primary structure, gene expression and chromosomal mapping of rodent homologs of the MEN1 tumor suppressor gene.</title>
        <authorList>
            <person name="Karges W."/>
            <person name="Maier S."/>
            <person name="Wissmann A."/>
            <person name="Dralle H."/>
            <person name="Dosch H.M."/>
            <person name="Boehm B.O."/>
        </authorList>
    </citation>
    <scope>NUCLEOTIDE SEQUENCE [MRNA] (ISOFORM 1)</scope>
    <scope>TISSUE SPECIFICITY</scope>
    <source>
        <strain>BALB/c X CBA</strain>
    </source>
</reference>
<reference key="3">
    <citation type="journal article" date="1999" name="J. Bone Miner. Res.">
        <title>Studies of the murine homolog of the multiple endocrine neoplasia type 1 (MEN1) gene, men1.</title>
        <authorList>
            <person name="Bassett J.H.D."/>
            <person name="Rashbass P."/>
            <person name="Harding B."/>
            <person name="Forbes S.A."/>
            <person name="Pannett A.A."/>
            <person name="Thakker R.V."/>
        </authorList>
    </citation>
    <scope>NUCLEOTIDE SEQUENCE [GENOMIC DNA / MRNA] (ISOFORM 1)</scope>
    <source>
        <strain>129/Ola</strain>
    </source>
</reference>
<reference key="4">
    <citation type="journal article" date="1999" name="Mamm. Genome">
        <title>Isolation, genomic organization, and expression analysis of Men1, the murine homolog of the MEN1 gene.</title>
        <authorList>
            <person name="Guru S.C."/>
            <person name="Crabtree J.S."/>
            <person name="Brown K.D."/>
            <person name="Dunn K.J."/>
            <person name="Manickam P."/>
            <person name="Prasad N.B."/>
            <person name="Wangsa D."/>
            <person name="Burns A.L."/>
            <person name="Spiegel A.M."/>
            <person name="Marx S.J."/>
            <person name="Pavan W.J."/>
            <person name="Collins F.S."/>
            <person name="Chandrasekharappa S.C."/>
        </authorList>
    </citation>
    <scope>NUCLEOTIDE SEQUENCE [GENOMIC DNA / MRNA] (ISOFORM 1)</scope>
    <scope>TISSUE SPECIFICITY</scope>
    <scope>DEVELOPMENTAL STAGE</scope>
    <source>
        <strain>129/Sv</strain>
    </source>
</reference>
<reference key="5">
    <citation type="journal article" date="1999" name="Mol. Cell. Endocrinol.">
        <title>Structure and distribution of rat menin mRNA.</title>
        <authorList>
            <person name="Maruyama K."/>
            <person name="Tsukada T."/>
            <person name="Hosono T."/>
            <person name="Ohkura N."/>
            <person name="Kishi M."/>
            <person name="Honda M."/>
            <person name="Nara-Ashizawa N."/>
            <person name="Nagasaki K."/>
            <person name="Yamaguchi K."/>
        </authorList>
    </citation>
    <scope>NUCLEOTIDE SEQUENCE [MRNA] (ISOFORM 1)</scope>
    <source>
        <strain>ICR</strain>
        <tissue>Brain</tissue>
    </source>
</reference>
<reference key="6">
    <citation type="journal article" date="2005" name="Science">
        <title>The transcriptional landscape of the mammalian genome.</title>
        <authorList>
            <person name="Carninci P."/>
            <person name="Kasukawa T."/>
            <person name="Katayama S."/>
            <person name="Gough J."/>
            <person name="Frith M.C."/>
            <person name="Maeda N."/>
            <person name="Oyama R."/>
            <person name="Ravasi T."/>
            <person name="Lenhard B."/>
            <person name="Wells C."/>
            <person name="Kodzius R."/>
            <person name="Shimokawa K."/>
            <person name="Bajic V.B."/>
            <person name="Brenner S.E."/>
            <person name="Batalov S."/>
            <person name="Forrest A.R."/>
            <person name="Zavolan M."/>
            <person name="Davis M.J."/>
            <person name="Wilming L.G."/>
            <person name="Aidinis V."/>
            <person name="Allen J.E."/>
            <person name="Ambesi-Impiombato A."/>
            <person name="Apweiler R."/>
            <person name="Aturaliya R.N."/>
            <person name="Bailey T.L."/>
            <person name="Bansal M."/>
            <person name="Baxter L."/>
            <person name="Beisel K.W."/>
            <person name="Bersano T."/>
            <person name="Bono H."/>
            <person name="Chalk A.M."/>
            <person name="Chiu K.P."/>
            <person name="Choudhary V."/>
            <person name="Christoffels A."/>
            <person name="Clutterbuck D.R."/>
            <person name="Crowe M.L."/>
            <person name="Dalla E."/>
            <person name="Dalrymple B.P."/>
            <person name="de Bono B."/>
            <person name="Della Gatta G."/>
            <person name="di Bernardo D."/>
            <person name="Down T."/>
            <person name="Engstrom P."/>
            <person name="Fagiolini M."/>
            <person name="Faulkner G."/>
            <person name="Fletcher C.F."/>
            <person name="Fukushima T."/>
            <person name="Furuno M."/>
            <person name="Futaki S."/>
            <person name="Gariboldi M."/>
            <person name="Georgii-Hemming P."/>
            <person name="Gingeras T.R."/>
            <person name="Gojobori T."/>
            <person name="Green R.E."/>
            <person name="Gustincich S."/>
            <person name="Harbers M."/>
            <person name="Hayashi Y."/>
            <person name="Hensch T.K."/>
            <person name="Hirokawa N."/>
            <person name="Hill D."/>
            <person name="Huminiecki L."/>
            <person name="Iacono M."/>
            <person name="Ikeo K."/>
            <person name="Iwama A."/>
            <person name="Ishikawa T."/>
            <person name="Jakt M."/>
            <person name="Kanapin A."/>
            <person name="Katoh M."/>
            <person name="Kawasawa Y."/>
            <person name="Kelso J."/>
            <person name="Kitamura H."/>
            <person name="Kitano H."/>
            <person name="Kollias G."/>
            <person name="Krishnan S.P."/>
            <person name="Kruger A."/>
            <person name="Kummerfeld S.K."/>
            <person name="Kurochkin I.V."/>
            <person name="Lareau L.F."/>
            <person name="Lazarevic D."/>
            <person name="Lipovich L."/>
            <person name="Liu J."/>
            <person name="Liuni S."/>
            <person name="McWilliam S."/>
            <person name="Madan Babu M."/>
            <person name="Madera M."/>
            <person name="Marchionni L."/>
            <person name="Matsuda H."/>
            <person name="Matsuzawa S."/>
            <person name="Miki H."/>
            <person name="Mignone F."/>
            <person name="Miyake S."/>
            <person name="Morris K."/>
            <person name="Mottagui-Tabar S."/>
            <person name="Mulder N."/>
            <person name="Nakano N."/>
            <person name="Nakauchi H."/>
            <person name="Ng P."/>
            <person name="Nilsson R."/>
            <person name="Nishiguchi S."/>
            <person name="Nishikawa S."/>
            <person name="Nori F."/>
            <person name="Ohara O."/>
            <person name="Okazaki Y."/>
            <person name="Orlando V."/>
            <person name="Pang K.C."/>
            <person name="Pavan W.J."/>
            <person name="Pavesi G."/>
            <person name="Pesole G."/>
            <person name="Petrovsky N."/>
            <person name="Piazza S."/>
            <person name="Reed J."/>
            <person name="Reid J.F."/>
            <person name="Ring B.Z."/>
            <person name="Ringwald M."/>
            <person name="Rost B."/>
            <person name="Ruan Y."/>
            <person name="Salzberg S.L."/>
            <person name="Sandelin A."/>
            <person name="Schneider C."/>
            <person name="Schoenbach C."/>
            <person name="Sekiguchi K."/>
            <person name="Semple C.A."/>
            <person name="Seno S."/>
            <person name="Sessa L."/>
            <person name="Sheng Y."/>
            <person name="Shibata Y."/>
            <person name="Shimada H."/>
            <person name="Shimada K."/>
            <person name="Silva D."/>
            <person name="Sinclair B."/>
            <person name="Sperling S."/>
            <person name="Stupka E."/>
            <person name="Sugiura K."/>
            <person name="Sultana R."/>
            <person name="Takenaka Y."/>
            <person name="Taki K."/>
            <person name="Tammoja K."/>
            <person name="Tan S.L."/>
            <person name="Tang S."/>
            <person name="Taylor M.S."/>
            <person name="Tegner J."/>
            <person name="Teichmann S.A."/>
            <person name="Ueda H.R."/>
            <person name="van Nimwegen E."/>
            <person name="Verardo R."/>
            <person name="Wei C.L."/>
            <person name="Yagi K."/>
            <person name="Yamanishi H."/>
            <person name="Zabarovsky E."/>
            <person name="Zhu S."/>
            <person name="Zimmer A."/>
            <person name="Hide W."/>
            <person name="Bult C."/>
            <person name="Grimmond S.M."/>
            <person name="Teasdale R.D."/>
            <person name="Liu E.T."/>
            <person name="Brusic V."/>
            <person name="Quackenbush J."/>
            <person name="Wahlestedt C."/>
            <person name="Mattick J.S."/>
            <person name="Hume D.A."/>
            <person name="Kai C."/>
            <person name="Sasaki D."/>
            <person name="Tomaru Y."/>
            <person name="Fukuda S."/>
            <person name="Kanamori-Katayama M."/>
            <person name="Suzuki M."/>
            <person name="Aoki J."/>
            <person name="Arakawa T."/>
            <person name="Iida J."/>
            <person name="Imamura K."/>
            <person name="Itoh M."/>
            <person name="Kato T."/>
            <person name="Kawaji H."/>
            <person name="Kawagashira N."/>
            <person name="Kawashima T."/>
            <person name="Kojima M."/>
            <person name="Kondo S."/>
            <person name="Konno H."/>
            <person name="Nakano K."/>
            <person name="Ninomiya N."/>
            <person name="Nishio T."/>
            <person name="Okada M."/>
            <person name="Plessy C."/>
            <person name="Shibata K."/>
            <person name="Shiraki T."/>
            <person name="Suzuki S."/>
            <person name="Tagami M."/>
            <person name="Waki K."/>
            <person name="Watahiki A."/>
            <person name="Okamura-Oho Y."/>
            <person name="Suzuki H."/>
            <person name="Kawai J."/>
            <person name="Hayashizaki Y."/>
        </authorList>
    </citation>
    <scope>NUCLEOTIDE SEQUENCE [LARGE SCALE MRNA] (ISOFORM 1)</scope>
    <source>
        <strain>NOD</strain>
        <tissue>Dendritic cell</tissue>
    </source>
</reference>
<reference key="7">
    <citation type="submission" date="2005-07" db="EMBL/GenBank/DDBJ databases">
        <authorList>
            <person name="Mural R.J."/>
            <person name="Adams M.D."/>
            <person name="Myers E.W."/>
            <person name="Smith H.O."/>
            <person name="Venter J.C."/>
        </authorList>
    </citation>
    <scope>NUCLEOTIDE SEQUENCE [LARGE SCALE GENOMIC DNA]</scope>
</reference>
<reference key="8">
    <citation type="journal article" date="2004" name="Genome Res.">
        <title>The status, quality, and expansion of the NIH full-length cDNA project: the Mammalian Gene Collection (MGC).</title>
        <authorList>
            <consortium name="The MGC Project Team"/>
        </authorList>
    </citation>
    <scope>NUCLEOTIDE SEQUENCE [LARGE SCALE MRNA] (ISOFORM 2)</scope>
    <source>
        <strain>FVB/N</strain>
        <tissue>Salivary gland</tissue>
    </source>
</reference>
<reference key="9">
    <citation type="journal article" date="1999" name="Cell">
        <title>Menin interacts with the AP1 transcription factor JunD and represses JunD-activated transcription.</title>
        <authorList>
            <person name="Agarwal S.K."/>
            <person name="Guru S.C."/>
            <person name="Heppner C."/>
            <person name="Erdos M.R."/>
            <person name="Collins R.M."/>
            <person name="Park S.Y."/>
            <person name="Saggar S."/>
            <person name="Chandrasekharappa S.C."/>
            <person name="Collins F.S."/>
            <person name="Spiegel A.M."/>
            <person name="Marx S.J."/>
            <person name="Burns A.L."/>
        </authorList>
    </citation>
    <scope>INTERACTION WITH JUND</scope>
</reference>
<reference key="10">
    <citation type="journal article" date="2001" name="Proc. Natl. Acad. Sci. U.S.A.">
        <title>A mouse model of multiple endocrine neoplasia, type 1, develops multiple endocrine tumors.</title>
        <authorList>
            <person name="Crabtree J.S."/>
            <person name="Scacheri P.C."/>
            <person name="Ward J.M."/>
            <person name="Garrett-Beal L."/>
            <person name="Emmert-Buck M.R."/>
            <person name="Edgemon K.A."/>
            <person name="Lorang D."/>
            <person name="Libutti S.K."/>
            <person name="Chandrasekharappa S.C."/>
            <person name="Marx S.J."/>
            <person name="Spiegel A.M."/>
            <person name="Collins F.S."/>
        </authorList>
    </citation>
    <scope>DISRUPTION PHENOTYPE</scope>
</reference>
<reference key="11">
    <citation type="journal article" date="2006" name="Proc. Natl. Acad. Sci. U.S.A.">
        <title>The tumor suppressor menin regulates hematopoiesis and myeloid transformation by influencing Hox gene expression.</title>
        <authorList>
            <person name="Chen Y.X."/>
            <person name="Yan J."/>
            <person name="Keeshan K."/>
            <person name="Tubbs A.T."/>
            <person name="Wang H."/>
            <person name="Silva A."/>
            <person name="Brown E.J."/>
            <person name="Hess J.L."/>
            <person name="Pear W.S."/>
            <person name="Hua X."/>
        </authorList>
    </citation>
    <scope>FUNCTION</scope>
</reference>
<feature type="chain" id="PRO_0000096412" description="Menin">
    <location>
        <begin position="1"/>
        <end position="611"/>
    </location>
</feature>
<feature type="region of interest" description="Interaction with FANCD2" evidence="1">
    <location>
        <begin position="214"/>
        <end position="390"/>
    </location>
</feature>
<feature type="region of interest" description="Disordered" evidence="2">
    <location>
        <begin position="460"/>
        <end position="553"/>
    </location>
</feature>
<feature type="compositionally biased region" description="Basic and acidic residues" evidence="2">
    <location>
        <begin position="484"/>
        <end position="500"/>
    </location>
</feature>
<feature type="modified residue" description="Phosphoserine" evidence="1">
    <location>
        <position position="487"/>
    </location>
</feature>
<feature type="modified residue" description="Phosphoserine" evidence="1">
    <location>
        <position position="544"/>
    </location>
</feature>
<feature type="modified residue" description="Phosphothreonine" evidence="1">
    <location>
        <position position="595"/>
    </location>
</feature>
<feature type="splice variant" id="VSP_041100" description="In isoform 2." evidence="9">
    <location>
        <begin position="396"/>
        <end position="450"/>
    </location>
</feature>
<feature type="sequence conflict" description="In Ref. 2; AAC26001/AAC78843." evidence="10" ref="2">
    <original>I</original>
    <variation>M</variation>
    <location>
        <position position="457"/>
    </location>
</feature>
<feature type="sequence conflict" description="In Ref. 2; AAC26001/AAC78843." evidence="10" ref="2">
    <original>E</original>
    <variation>G</variation>
    <location>
        <position position="466"/>
    </location>
</feature>
<feature type="sequence conflict" description="In Ref. 2; AAC26001/AAC78843 and 8; AAH36287." evidence="10" ref="2 8">
    <original>S</original>
    <variation>L</variation>
    <location>
        <position position="512"/>
    </location>
</feature>
<gene>
    <name type="primary">Men1</name>
</gene>
<dbReference type="EMBL" id="AF016398">
    <property type="protein sequence ID" value="AAC79938.1"/>
    <property type="molecule type" value="mRNA"/>
</dbReference>
<dbReference type="EMBL" id="AF024513">
    <property type="protein sequence ID" value="AAC79939.1"/>
    <property type="molecule type" value="Genomic_DNA"/>
</dbReference>
<dbReference type="EMBL" id="AF130368">
    <property type="protein sequence ID" value="AAF01352.1"/>
    <property type="molecule type" value="mRNA"/>
</dbReference>
<dbReference type="EMBL" id="AF072755">
    <property type="protein sequence ID" value="AAC26001.1"/>
    <property type="molecule type" value="mRNA"/>
</dbReference>
<dbReference type="EMBL" id="AF093756">
    <property type="protein sequence ID" value="AAC78843.1"/>
    <property type="molecule type" value="Genomic_DNA"/>
</dbReference>
<dbReference type="EMBL" id="AF109389">
    <property type="protein sequence ID" value="AAD37498.1"/>
    <property type="molecule type" value="mRNA"/>
</dbReference>
<dbReference type="EMBL" id="AF109390">
    <property type="protein sequence ID" value="AAD38333.1"/>
    <property type="molecule type" value="Genomic_DNA"/>
</dbReference>
<dbReference type="EMBL" id="AB023401">
    <property type="protein sequence ID" value="BAA74964.1"/>
    <property type="molecule type" value="mRNA"/>
</dbReference>
<dbReference type="EMBL" id="AK154371">
    <property type="protein sequence ID" value="BAE32542.1"/>
    <property type="status" value="ALT_INIT"/>
    <property type="molecule type" value="mRNA"/>
</dbReference>
<dbReference type="EMBL" id="AK170713">
    <property type="protein sequence ID" value="BAE41971.1"/>
    <property type="molecule type" value="mRNA"/>
</dbReference>
<dbReference type="EMBL" id="CH466612">
    <property type="protein sequence ID" value="EDL33234.1"/>
    <property type="molecule type" value="Genomic_DNA"/>
</dbReference>
<dbReference type="EMBL" id="CH466612">
    <property type="protein sequence ID" value="EDL33236.1"/>
    <property type="molecule type" value="Genomic_DNA"/>
</dbReference>
<dbReference type="EMBL" id="BC036287">
    <property type="protein sequence ID" value="AAH36287.1"/>
    <property type="molecule type" value="mRNA"/>
</dbReference>
<dbReference type="CCDS" id="CCDS29502.1">
    <molecule id="O88559-1"/>
</dbReference>
<dbReference type="CCDS" id="CCDS50367.1">
    <molecule id="O88559-2"/>
</dbReference>
<dbReference type="RefSeq" id="NP_001161960.1">
    <property type="nucleotide sequence ID" value="NM_001168488.1"/>
</dbReference>
<dbReference type="RefSeq" id="NP_001161961.1">
    <molecule id="O88559-1"/>
    <property type="nucleotide sequence ID" value="NM_001168489.1"/>
</dbReference>
<dbReference type="RefSeq" id="NP_001161962.1">
    <molecule id="O88559-2"/>
    <property type="nucleotide sequence ID" value="NM_001168490.1"/>
</dbReference>
<dbReference type="RefSeq" id="NP_032609.1">
    <molecule id="O88559-1"/>
    <property type="nucleotide sequence ID" value="NM_008583.2"/>
</dbReference>
<dbReference type="SMR" id="O88559"/>
<dbReference type="BioGRID" id="201393">
    <property type="interactions" value="11"/>
</dbReference>
<dbReference type="ComplexPortal" id="CPX-628">
    <property type="entry name" value="Menin-JUND transcription inhibition complex"/>
</dbReference>
<dbReference type="FunCoup" id="O88559">
    <property type="interactions" value="2847"/>
</dbReference>
<dbReference type="IntAct" id="O88559">
    <property type="interactions" value="6"/>
</dbReference>
<dbReference type="MINT" id="O88559"/>
<dbReference type="STRING" id="10090.ENSMUSP00000109130"/>
<dbReference type="ChEMBL" id="CHEMBL3124739"/>
<dbReference type="GlyGen" id="O88559">
    <property type="glycosylation" value="2 sites, 1 N-linked glycan (1 site)"/>
</dbReference>
<dbReference type="iPTMnet" id="O88559"/>
<dbReference type="PhosphoSitePlus" id="O88559"/>
<dbReference type="jPOST" id="O88559"/>
<dbReference type="PaxDb" id="10090-ENSMUSP00000058149"/>
<dbReference type="PeptideAtlas" id="O88559"/>
<dbReference type="ProteomicsDB" id="295884">
    <molecule id="O88559-1"/>
</dbReference>
<dbReference type="ProteomicsDB" id="295885">
    <molecule id="O88559-2"/>
</dbReference>
<dbReference type="Pumba" id="O88559"/>
<dbReference type="Antibodypedia" id="15626">
    <property type="antibodies" value="544 antibodies from 44 providers"/>
</dbReference>
<dbReference type="DNASU" id="17283"/>
<dbReference type="Ensembl" id="ENSMUST00000056391.15">
    <molecule id="O88559-1"/>
    <property type="protein sequence ID" value="ENSMUSP00000058149.9"/>
    <property type="gene ID" value="ENSMUSG00000024947.18"/>
</dbReference>
<dbReference type="Ensembl" id="ENSMUST00000078137.12">
    <molecule id="O88559-2"/>
    <property type="protein sequence ID" value="ENSMUSP00000077272.6"/>
    <property type="gene ID" value="ENSMUSG00000024947.18"/>
</dbReference>
<dbReference type="Ensembl" id="ENSMUST00000079327.12">
    <molecule id="O88559-1"/>
    <property type="protein sequence ID" value="ENSMUSP00000078306.6"/>
    <property type="gene ID" value="ENSMUSG00000024947.18"/>
</dbReference>
<dbReference type="Ensembl" id="ENSMUST00000113500.8">
    <molecule id="O88559-1"/>
    <property type="protein sequence ID" value="ENSMUSP00000109128.2"/>
    <property type="gene ID" value="ENSMUSG00000024947.18"/>
</dbReference>
<dbReference type="Ensembl" id="ENSMUST00000113504.10">
    <molecule id="O88559-1"/>
    <property type="protein sequence ID" value="ENSMUSP00000109132.4"/>
    <property type="gene ID" value="ENSMUSG00000024947.18"/>
</dbReference>
<dbReference type="GeneID" id="17283"/>
<dbReference type="KEGG" id="mmu:17283"/>
<dbReference type="UCSC" id="uc008gib.2">
    <molecule id="O88559-1"/>
    <property type="organism name" value="mouse"/>
</dbReference>
<dbReference type="UCSC" id="uc012bhl.1">
    <molecule id="O88559-2"/>
    <property type="organism name" value="mouse"/>
</dbReference>
<dbReference type="AGR" id="MGI:1316736"/>
<dbReference type="CTD" id="4221"/>
<dbReference type="MGI" id="MGI:1316736">
    <property type="gene designation" value="Men1"/>
</dbReference>
<dbReference type="VEuPathDB" id="HostDB:ENSMUSG00000024947"/>
<dbReference type="eggNOG" id="ENOG502QUYK">
    <property type="taxonomic scope" value="Eukaryota"/>
</dbReference>
<dbReference type="GeneTree" id="ENSGT00390000014237"/>
<dbReference type="HOGENOM" id="CLU_018646_0_0_1"/>
<dbReference type="InParanoid" id="O88559"/>
<dbReference type="OrthoDB" id="5962932at2759"/>
<dbReference type="TreeFam" id="TF323888"/>
<dbReference type="Reactome" id="R-MMU-201722">
    <property type="pathway name" value="Formation of the beta-catenin:TCF transactivating complex"/>
</dbReference>
<dbReference type="Reactome" id="R-MMU-2173796">
    <property type="pathway name" value="SMAD2/SMAD3:SMAD4 heterotrimer regulates transcription"/>
</dbReference>
<dbReference type="Reactome" id="R-MMU-381426">
    <property type="pathway name" value="Regulation of Insulin-like Growth Factor (IGF) transport and uptake by Insulin-like Growth Factor Binding Proteins (IGFBPs)"/>
</dbReference>
<dbReference type="Reactome" id="R-MMU-5626467">
    <property type="pathway name" value="RHO GTPases activate IQGAPs"/>
</dbReference>
<dbReference type="Reactome" id="R-MMU-8957275">
    <property type="pathway name" value="Post-translational protein phosphorylation"/>
</dbReference>
<dbReference type="Reactome" id="R-MMU-9772755">
    <property type="pathway name" value="Formation of WDR5-containing histone-modifying complexes"/>
</dbReference>
<dbReference type="BioGRID-ORCS" id="17283">
    <property type="hits" value="19 hits in 82 CRISPR screens"/>
</dbReference>
<dbReference type="ChiTaRS" id="Men1">
    <property type="organism name" value="mouse"/>
</dbReference>
<dbReference type="PRO" id="PR:O88559"/>
<dbReference type="Proteomes" id="UP000000589">
    <property type="component" value="Chromosome 19"/>
</dbReference>
<dbReference type="RNAct" id="O88559">
    <property type="molecule type" value="protein"/>
</dbReference>
<dbReference type="Bgee" id="ENSMUSG00000024947">
    <property type="expression patterns" value="Expressed in undifferentiated genital tubercle and 92 other cell types or tissues"/>
</dbReference>
<dbReference type="ExpressionAtlas" id="O88559">
    <property type="expression patterns" value="baseline and differential"/>
</dbReference>
<dbReference type="GO" id="GO:0000781">
    <property type="term" value="C:chromosome, telomeric region"/>
    <property type="evidence" value="ECO:0000314"/>
    <property type="project" value="BHF-UCL"/>
</dbReference>
<dbReference type="GO" id="GO:0005737">
    <property type="term" value="C:cytoplasm"/>
    <property type="evidence" value="ECO:0000314"/>
    <property type="project" value="MGI"/>
</dbReference>
<dbReference type="GO" id="GO:0035097">
    <property type="term" value="C:histone methyltransferase complex"/>
    <property type="evidence" value="ECO:0000266"/>
    <property type="project" value="MGI"/>
</dbReference>
<dbReference type="GO" id="GO:0005634">
    <property type="term" value="C:nucleus"/>
    <property type="evidence" value="ECO:0000314"/>
    <property type="project" value="MGI"/>
</dbReference>
<dbReference type="GO" id="GO:0017053">
    <property type="term" value="C:transcription repressor complex"/>
    <property type="evidence" value="ECO:0000266"/>
    <property type="project" value="ComplexPortal"/>
</dbReference>
<dbReference type="GO" id="GO:0003682">
    <property type="term" value="F:chromatin binding"/>
    <property type="evidence" value="ECO:0000314"/>
    <property type="project" value="MGI"/>
</dbReference>
<dbReference type="GO" id="GO:0003677">
    <property type="term" value="F:DNA binding"/>
    <property type="evidence" value="ECO:0000314"/>
    <property type="project" value="MGI"/>
</dbReference>
<dbReference type="GO" id="GO:0001216">
    <property type="term" value="F:DNA-binding transcription activator activity"/>
    <property type="evidence" value="ECO:0000314"/>
    <property type="project" value="UniProtKB"/>
</dbReference>
<dbReference type="GO" id="GO:0043565">
    <property type="term" value="F:sequence-specific DNA binding"/>
    <property type="evidence" value="ECO:0000314"/>
    <property type="project" value="MGI"/>
</dbReference>
<dbReference type="GO" id="GO:0000976">
    <property type="term" value="F:transcription cis-regulatory region binding"/>
    <property type="evidence" value="ECO:0000314"/>
    <property type="project" value="UniProtKB"/>
</dbReference>
<dbReference type="GO" id="GO:0051301">
    <property type="term" value="P:cell division"/>
    <property type="evidence" value="ECO:0000315"/>
    <property type="project" value="MGI"/>
</dbReference>
<dbReference type="GO" id="GO:0008283">
    <property type="term" value="P:cell population proliferation"/>
    <property type="evidence" value="ECO:0000314"/>
    <property type="project" value="MGI"/>
</dbReference>
<dbReference type="GO" id="GO:0006338">
    <property type="term" value="P:chromatin remodeling"/>
    <property type="evidence" value="ECO:0000315"/>
    <property type="project" value="MGI"/>
</dbReference>
<dbReference type="GO" id="GO:0048704">
    <property type="term" value="P:embryonic skeletal system morphogenesis"/>
    <property type="evidence" value="ECO:0000315"/>
    <property type="project" value="MGI"/>
</dbReference>
<dbReference type="GO" id="GO:0044346">
    <property type="term" value="P:fibroblast apoptotic process"/>
    <property type="evidence" value="ECO:0000314"/>
    <property type="project" value="MGI"/>
</dbReference>
<dbReference type="GO" id="GO:0048144">
    <property type="term" value="P:fibroblast proliferation"/>
    <property type="evidence" value="ECO:0000315"/>
    <property type="project" value="MGI"/>
</dbReference>
<dbReference type="GO" id="GO:0030097">
    <property type="term" value="P:hemopoiesis"/>
    <property type="evidence" value="ECO:0000315"/>
    <property type="project" value="MGI"/>
</dbReference>
<dbReference type="GO" id="GO:0001776">
    <property type="term" value="P:leukocyte homeostasis"/>
    <property type="evidence" value="ECO:0000315"/>
    <property type="project" value="MGI"/>
</dbReference>
<dbReference type="GO" id="GO:0060135">
    <property type="term" value="P:maternal process involved in female pregnancy"/>
    <property type="evidence" value="ECO:0000314"/>
    <property type="project" value="MGI"/>
</dbReference>
<dbReference type="GO" id="GO:0008285">
    <property type="term" value="P:negative regulation of cell population proliferation"/>
    <property type="evidence" value="ECO:0000314"/>
    <property type="project" value="MGI"/>
</dbReference>
<dbReference type="GO" id="GO:0048147">
    <property type="term" value="P:negative regulation of fibroblast proliferation"/>
    <property type="evidence" value="ECO:0000315"/>
    <property type="project" value="MGI"/>
</dbReference>
<dbReference type="GO" id="GO:0046621">
    <property type="term" value="P:negative regulation of organ growth"/>
    <property type="evidence" value="ECO:0000314"/>
    <property type="project" value="MGI"/>
</dbReference>
<dbReference type="GO" id="GO:0045668">
    <property type="term" value="P:negative regulation of osteoblast differentiation"/>
    <property type="evidence" value="ECO:0000314"/>
    <property type="project" value="MGI"/>
</dbReference>
<dbReference type="GO" id="GO:2000647">
    <property type="term" value="P:negative regulation of stem cell proliferation"/>
    <property type="evidence" value="ECO:0000315"/>
    <property type="project" value="MGI"/>
</dbReference>
<dbReference type="GO" id="GO:0000122">
    <property type="term" value="P:negative regulation of transcription by RNA polymerase II"/>
    <property type="evidence" value="ECO:0000314"/>
    <property type="project" value="MGI"/>
</dbReference>
<dbReference type="GO" id="GO:1904691">
    <property type="term" value="P:negative regulation of type B pancreatic cell proliferation"/>
    <property type="evidence" value="ECO:0000314"/>
    <property type="project" value="MGI"/>
</dbReference>
<dbReference type="GO" id="GO:0035265">
    <property type="term" value="P:organ growth"/>
    <property type="evidence" value="ECO:0000314"/>
    <property type="project" value="MGI"/>
</dbReference>
<dbReference type="GO" id="GO:0001503">
    <property type="term" value="P:ossification"/>
    <property type="evidence" value="ECO:0000315"/>
    <property type="project" value="MGI"/>
</dbReference>
<dbReference type="GO" id="GO:0002076">
    <property type="term" value="P:osteoblast development"/>
    <property type="evidence" value="ECO:0000316"/>
    <property type="project" value="MGI"/>
</dbReference>
<dbReference type="GO" id="GO:0002051">
    <property type="term" value="P:osteoblast fate commitment"/>
    <property type="evidence" value="ECO:0000316"/>
    <property type="project" value="MGI"/>
</dbReference>
<dbReference type="GO" id="GO:0051781">
    <property type="term" value="P:positive regulation of cell division"/>
    <property type="evidence" value="ECO:0000315"/>
    <property type="project" value="MGI"/>
</dbReference>
<dbReference type="GO" id="GO:0045893">
    <property type="term" value="P:positive regulation of DNA-templated transcription"/>
    <property type="evidence" value="ECO:0000314"/>
    <property type="project" value="MGI"/>
</dbReference>
<dbReference type="GO" id="GO:2000271">
    <property type="term" value="P:positive regulation of fibroblast apoptotic process"/>
    <property type="evidence" value="ECO:0000314"/>
    <property type="project" value="MGI"/>
</dbReference>
<dbReference type="GO" id="GO:0010628">
    <property type="term" value="P:positive regulation of gene expression"/>
    <property type="evidence" value="ECO:0000314"/>
    <property type="project" value="MGI"/>
</dbReference>
<dbReference type="GO" id="GO:0045669">
    <property type="term" value="P:positive regulation of osteoblast differentiation"/>
    <property type="evidence" value="ECO:0000316"/>
    <property type="project" value="MGI"/>
</dbReference>
<dbReference type="GO" id="GO:2000738">
    <property type="term" value="P:positive regulation of stem cell differentiation"/>
    <property type="evidence" value="ECO:0000315"/>
    <property type="project" value="MGI"/>
</dbReference>
<dbReference type="GO" id="GO:0045944">
    <property type="term" value="P:positive regulation of transcription by RNA polymerase II"/>
    <property type="evidence" value="ECO:0000314"/>
    <property type="project" value="MGI"/>
</dbReference>
<dbReference type="GO" id="GO:2000045">
    <property type="term" value="P:regulation of G1/S transition of mitotic cell cycle"/>
    <property type="evidence" value="ECO:0000315"/>
    <property type="project" value="MGI"/>
</dbReference>
<dbReference type="GO" id="GO:0010468">
    <property type="term" value="P:regulation of gene expression"/>
    <property type="evidence" value="ECO:0000314"/>
    <property type="project" value="MGI"/>
</dbReference>
<dbReference type="GO" id="GO:0060021">
    <property type="term" value="P:roof of mouth development"/>
    <property type="evidence" value="ECO:0000315"/>
    <property type="project" value="MGI"/>
</dbReference>
<dbReference type="GO" id="GO:0048863">
    <property type="term" value="P:stem cell differentiation"/>
    <property type="evidence" value="ECO:0000315"/>
    <property type="project" value="MGI"/>
</dbReference>
<dbReference type="GO" id="GO:0072089">
    <property type="term" value="P:stem cell proliferation"/>
    <property type="evidence" value="ECO:0000315"/>
    <property type="project" value="MGI"/>
</dbReference>
<dbReference type="GO" id="GO:0045815">
    <property type="term" value="P:transcription initiation-coupled chromatin remodeling"/>
    <property type="evidence" value="ECO:0000315"/>
    <property type="project" value="UniProtKB"/>
</dbReference>
<dbReference type="GO" id="GO:0044342">
    <property type="term" value="P:type B pancreatic cell proliferation"/>
    <property type="evidence" value="ECO:0000314"/>
    <property type="project" value="MGI"/>
</dbReference>
<dbReference type="CDD" id="cd14456">
    <property type="entry name" value="Menin"/>
    <property type="match status" value="1"/>
</dbReference>
<dbReference type="InterPro" id="IPR007747">
    <property type="entry name" value="Menin"/>
</dbReference>
<dbReference type="PANTHER" id="PTHR12693">
    <property type="entry name" value="MENIN"/>
    <property type="match status" value="1"/>
</dbReference>
<dbReference type="PANTHER" id="PTHR12693:SF3">
    <property type="entry name" value="MENIN"/>
    <property type="match status" value="1"/>
</dbReference>
<dbReference type="Pfam" id="PF05053">
    <property type="entry name" value="Menin"/>
    <property type="match status" value="2"/>
</dbReference>
<keyword id="KW-0025">Alternative splicing</keyword>
<keyword id="KW-0156">Chromatin regulator</keyword>
<keyword id="KW-0238">DNA-binding</keyword>
<keyword id="KW-0539">Nucleus</keyword>
<keyword id="KW-0597">Phosphoprotein</keyword>
<keyword id="KW-1185">Reference proteome</keyword>
<keyword id="KW-0678">Repressor</keyword>
<keyword id="KW-0804">Transcription</keyword>
<keyword id="KW-0805">Transcription regulation</keyword>
<proteinExistence type="evidence at protein level"/>
<sequence>MGLKAAQKTLFPLRSIDDVVRLFAAELGREEPDLVLLSLVLGFVEHFLAVNRVIPTNVPELTFQPSPAPDPPGGLTYFPVADLSIIAALYARFTAQIRGAVDLSLYPREGGVSSRELVKKVSDVIWNSLSRSYFKDRAHIQSLFSFITGTKLDSSGVAFAVVGACQALGLRDVHLALSEDHAWVVFGPNGEQTAEVTWHGKGNEDRRGQTVNAGVAERSWLYLKGSYMRCDRKMEVAFMVCAINPSIDLHTDSLELLQLQQKLLWLLYDLGHLERYPMALGNLADLEELEPTPGRPDPLTLYHKGIASAKTYYQDEHIYPYMYLAGYHCRNRNVREALQAWADTATVIQDYNYCREDEEIYKEFFEVANDVIPNLLKEAASLLETGEERTGEQAQGTQGQGSALQDPECFAHLLRFYDGICKWEEGSPTPVLHVGWATFLVQSLGRFEGQVRQKVHIVSREAEAAEAEEPWGDEAREGRRRGPRRESKPEEPPPPKKPALDKGPGSGQSAGSGPPRKTSGTVPGTTRGGQEVGNAAQAPAPAASPPPEGPVLTFQSEKMKGMKELLVATKINSSAIKLQLTAQSQVQMKKQKVSTPSDYTLSFLKRQRKGL</sequence>
<protein>
    <recommendedName>
        <fullName>Menin</fullName>
    </recommendedName>
</protein>
<name>MEN1_MOUSE</name>